<protein>
    <recommendedName>
        <fullName>Adenosylmethionine-8-amino-7-oxononanoate aminotransferase</fullName>
        <ecNumber evidence="3 4">2.6.1.62</ecNumber>
    </recommendedName>
    <alternativeName>
        <fullName evidence="11">7,8-diamino-pelargonic acid aminotransferase</fullName>
        <shortName>DAPA AT</shortName>
        <shortName evidence="12">DAPA aminotransferase</shortName>
    </alternativeName>
    <alternativeName>
        <fullName>7,8-diaminononanoate synthase</fullName>
        <shortName>DANS</shortName>
    </alternativeName>
    <alternativeName>
        <fullName>Diaminopelargonic acid synthase</fullName>
    </alternativeName>
</protein>
<sequence length="429" mass="47336">MTTDDLAFDQRHIWHPYTSMTSPLPVYPVVSAEGCELILSDGRRLVDGMSSWWAAIHGYNHPQLNAAMKSQIDAMSHVMFGGITHAPAIELCRKLVAMTPQPLECVFLADSGSVAVEVAMKMALQYWQAKGEARQRFLTFRNGYHGDTFGAMSVCDPDNSMHSLWKGYLPENLFAPAPQSRMDGEWDERDMVGFARLMAAHRHEIAAVIIEPIVQGAGGMRMYHPEWLKRIRKICDREGILLIADEIATGFGRTGKLFACEHAEIAPDILCLGKALTGGTMTLSATLTTREVAETISNGEAGCFMHGPTFMGNPLACAAANASLAILESGDWQQQVADIEVQLREQLAPARDAEMVADVRVLGAIGVVETTHPVNMAALQKFFVEQGVWIRPFGKLIYLMPPYIILPQQLQRLTAAVNRAVQDETFFCQ</sequence>
<dbReference type="EC" id="2.6.1.62" evidence="3 4"/>
<dbReference type="EMBL" id="J04423">
    <property type="protein sequence ID" value="AAA23514.1"/>
    <property type="molecule type" value="Genomic_DNA"/>
</dbReference>
<dbReference type="EMBL" id="A11524">
    <property type="protein sequence ID" value="CAA00964.1"/>
    <property type="molecule type" value="Unassigned_DNA"/>
</dbReference>
<dbReference type="EMBL" id="U00096">
    <property type="protein sequence ID" value="AAC73861.1"/>
    <property type="molecule type" value="Genomic_DNA"/>
</dbReference>
<dbReference type="EMBL" id="AP009048">
    <property type="protein sequence ID" value="BAE76361.1"/>
    <property type="molecule type" value="Genomic_DNA"/>
</dbReference>
<dbReference type="PIR" id="F64813">
    <property type="entry name" value="XNECDP"/>
</dbReference>
<dbReference type="RefSeq" id="NP_415295.1">
    <property type="nucleotide sequence ID" value="NC_000913.3"/>
</dbReference>
<dbReference type="RefSeq" id="WP_001295303.1">
    <property type="nucleotide sequence ID" value="NZ_SSZK01000002.1"/>
</dbReference>
<dbReference type="PDB" id="1DTY">
    <property type="method" value="X-ray"/>
    <property type="resolution" value="2.14 A"/>
    <property type="chains" value="A/B=1-429"/>
</dbReference>
<dbReference type="PDB" id="1MGV">
    <property type="method" value="X-ray"/>
    <property type="resolution" value="2.10 A"/>
    <property type="chains" value="A/B=1-429"/>
</dbReference>
<dbReference type="PDB" id="1MLY">
    <property type="method" value="X-ray"/>
    <property type="resolution" value="1.81 A"/>
    <property type="chains" value="A/B=1-429"/>
</dbReference>
<dbReference type="PDB" id="1MLZ">
    <property type="method" value="X-ray"/>
    <property type="resolution" value="2.15 A"/>
    <property type="chains" value="A/B=1-429"/>
</dbReference>
<dbReference type="PDB" id="1QJ3">
    <property type="method" value="X-ray"/>
    <property type="resolution" value="2.70 A"/>
    <property type="chains" value="A/B=1-429"/>
</dbReference>
<dbReference type="PDB" id="1QJ5">
    <property type="method" value="X-ray"/>
    <property type="resolution" value="1.80 A"/>
    <property type="chains" value="A/B=1-429"/>
</dbReference>
<dbReference type="PDB" id="1S06">
    <property type="method" value="X-ray"/>
    <property type="resolution" value="2.20 A"/>
    <property type="chains" value="A/B=1-429"/>
</dbReference>
<dbReference type="PDB" id="1S07">
    <property type="method" value="X-ray"/>
    <property type="resolution" value="2.42 A"/>
    <property type="chains" value="A/B=1-429"/>
</dbReference>
<dbReference type="PDB" id="1S08">
    <property type="method" value="X-ray"/>
    <property type="resolution" value="2.10 A"/>
    <property type="chains" value="A/B=1-429"/>
</dbReference>
<dbReference type="PDB" id="1S09">
    <property type="method" value="X-ray"/>
    <property type="resolution" value="1.83 A"/>
    <property type="chains" value="A/B=1-429"/>
</dbReference>
<dbReference type="PDB" id="1S0A">
    <property type="method" value="X-ray"/>
    <property type="resolution" value="1.71 A"/>
    <property type="chains" value="A/B=1-429"/>
</dbReference>
<dbReference type="PDB" id="6ED7">
    <property type="method" value="X-ray"/>
    <property type="resolution" value="2.43 A"/>
    <property type="chains" value="A/B/C/D/E/F/G/H=2-429"/>
</dbReference>
<dbReference type="PDBsum" id="1DTY"/>
<dbReference type="PDBsum" id="1MGV"/>
<dbReference type="PDBsum" id="1MLY"/>
<dbReference type="PDBsum" id="1MLZ"/>
<dbReference type="PDBsum" id="1QJ3"/>
<dbReference type="PDBsum" id="1QJ5"/>
<dbReference type="PDBsum" id="1S06"/>
<dbReference type="PDBsum" id="1S07"/>
<dbReference type="PDBsum" id="1S08"/>
<dbReference type="PDBsum" id="1S09"/>
<dbReference type="PDBsum" id="1S0A"/>
<dbReference type="PDBsum" id="6ED7"/>
<dbReference type="SMR" id="P12995"/>
<dbReference type="BioGRID" id="4261841">
    <property type="interactions" value="17"/>
</dbReference>
<dbReference type="DIP" id="DIP-9219N"/>
<dbReference type="FunCoup" id="P12995">
    <property type="interactions" value="301"/>
</dbReference>
<dbReference type="IntAct" id="P12995">
    <property type="interactions" value="5"/>
</dbReference>
<dbReference type="STRING" id="511145.b0774"/>
<dbReference type="DrugBank" id="DB02725">
    <property type="generic name" value="2-Amino-4-(4-Amino-Cyclohexa-2,5-Dienyl)-Butyric Acid"/>
</dbReference>
<dbReference type="DrugBank" id="DB02274">
    <property type="generic name" value="7-Keto-8-Aminopelargonic Acid"/>
</dbReference>
<dbReference type="DrugBank" id="DB04083">
    <property type="generic name" value="N(6)-(pyridoxal phosphate)-L-lysine"/>
</dbReference>
<dbReference type="PaxDb" id="511145-b0774"/>
<dbReference type="EnsemblBacteria" id="AAC73861">
    <property type="protein sequence ID" value="AAC73861"/>
    <property type="gene ID" value="b0774"/>
</dbReference>
<dbReference type="GeneID" id="93776656"/>
<dbReference type="GeneID" id="945376"/>
<dbReference type="KEGG" id="ecj:JW0757"/>
<dbReference type="KEGG" id="eco:b0774"/>
<dbReference type="PATRIC" id="fig|511145.12.peg.800"/>
<dbReference type="EchoBASE" id="EB0115"/>
<dbReference type="eggNOG" id="COG0161">
    <property type="taxonomic scope" value="Bacteria"/>
</dbReference>
<dbReference type="HOGENOM" id="CLU_016922_4_3_6"/>
<dbReference type="InParanoid" id="P12995"/>
<dbReference type="OMA" id="YTMPPYV"/>
<dbReference type="PhylomeDB" id="P12995"/>
<dbReference type="BioCyc" id="EcoCyc:DAPASYN-MONOMER"/>
<dbReference type="BioCyc" id="MetaCyc:DAPASYN-MONOMER"/>
<dbReference type="BRENDA" id="2.6.1.62">
    <property type="organism ID" value="2026"/>
</dbReference>
<dbReference type="SABIO-RK" id="P12995"/>
<dbReference type="UniPathway" id="UPA00078">
    <property type="reaction ID" value="UER00160"/>
</dbReference>
<dbReference type="EvolutionaryTrace" id="P12995"/>
<dbReference type="PRO" id="PR:P12995"/>
<dbReference type="Proteomes" id="UP000000625">
    <property type="component" value="Chromosome"/>
</dbReference>
<dbReference type="GO" id="GO:0005737">
    <property type="term" value="C:cytoplasm"/>
    <property type="evidence" value="ECO:0007669"/>
    <property type="project" value="UniProtKB-SubCell"/>
</dbReference>
<dbReference type="GO" id="GO:0004015">
    <property type="term" value="F:adenosylmethionine-8-amino-7-oxononanoate transaminase activity"/>
    <property type="evidence" value="ECO:0000314"/>
    <property type="project" value="UniProtKB"/>
</dbReference>
<dbReference type="GO" id="GO:0042803">
    <property type="term" value="F:protein homodimerization activity"/>
    <property type="evidence" value="ECO:0000314"/>
    <property type="project" value="EcoCyc"/>
</dbReference>
<dbReference type="GO" id="GO:0030170">
    <property type="term" value="F:pyridoxal phosphate binding"/>
    <property type="evidence" value="ECO:0000314"/>
    <property type="project" value="UniProtKB"/>
</dbReference>
<dbReference type="GO" id="GO:0009102">
    <property type="term" value="P:biotin biosynthetic process"/>
    <property type="evidence" value="ECO:0000314"/>
    <property type="project" value="UniProtKB"/>
</dbReference>
<dbReference type="CDD" id="cd00610">
    <property type="entry name" value="OAT_like"/>
    <property type="match status" value="1"/>
</dbReference>
<dbReference type="FunFam" id="3.40.640.10:FF:000041">
    <property type="entry name" value="Adenosylmethionine-8-amino-7-oxononanoate aminotransferase"/>
    <property type="match status" value="1"/>
</dbReference>
<dbReference type="Gene3D" id="3.90.1150.10">
    <property type="entry name" value="Aspartate Aminotransferase, domain 1"/>
    <property type="match status" value="1"/>
</dbReference>
<dbReference type="Gene3D" id="3.40.640.10">
    <property type="entry name" value="Type I PLP-dependent aspartate aminotransferase-like (Major domain)"/>
    <property type="match status" value="1"/>
</dbReference>
<dbReference type="HAMAP" id="MF_00834">
    <property type="entry name" value="BioA"/>
    <property type="match status" value="1"/>
</dbReference>
<dbReference type="InterPro" id="IPR005814">
    <property type="entry name" value="Aminotrans_3"/>
</dbReference>
<dbReference type="InterPro" id="IPR049704">
    <property type="entry name" value="Aminotrans_3_PPA_site"/>
</dbReference>
<dbReference type="InterPro" id="IPR005815">
    <property type="entry name" value="BioA"/>
</dbReference>
<dbReference type="InterPro" id="IPR015424">
    <property type="entry name" value="PyrdxlP-dep_Trfase"/>
</dbReference>
<dbReference type="InterPro" id="IPR015421">
    <property type="entry name" value="PyrdxlP-dep_Trfase_major"/>
</dbReference>
<dbReference type="InterPro" id="IPR015422">
    <property type="entry name" value="PyrdxlP-dep_Trfase_small"/>
</dbReference>
<dbReference type="NCBIfam" id="TIGR00508">
    <property type="entry name" value="bioA"/>
    <property type="match status" value="1"/>
</dbReference>
<dbReference type="NCBIfam" id="NF004624">
    <property type="entry name" value="PRK05964.1"/>
    <property type="match status" value="1"/>
</dbReference>
<dbReference type="NCBIfam" id="NF005940">
    <property type="entry name" value="PRK07986.1"/>
    <property type="match status" value="1"/>
</dbReference>
<dbReference type="PANTHER" id="PTHR42684">
    <property type="entry name" value="ADENOSYLMETHIONINE-8-AMINO-7-OXONONANOATE AMINOTRANSFERASE"/>
    <property type="match status" value="1"/>
</dbReference>
<dbReference type="PANTHER" id="PTHR42684:SF17">
    <property type="entry name" value="ADENOSYLMETHIONINE-8-AMINO-7-OXONONANOATE AMINOTRANSFERASE"/>
    <property type="match status" value="1"/>
</dbReference>
<dbReference type="Pfam" id="PF00202">
    <property type="entry name" value="Aminotran_3"/>
    <property type="match status" value="1"/>
</dbReference>
<dbReference type="PIRSF" id="PIRSF000521">
    <property type="entry name" value="Transaminase_4ab_Lys_Orn"/>
    <property type="match status" value="1"/>
</dbReference>
<dbReference type="SUPFAM" id="SSF53383">
    <property type="entry name" value="PLP-dependent transferases"/>
    <property type="match status" value="1"/>
</dbReference>
<dbReference type="PROSITE" id="PS00600">
    <property type="entry name" value="AA_TRANSFER_CLASS_3"/>
    <property type="match status" value="1"/>
</dbReference>
<proteinExistence type="evidence at protein level"/>
<organism>
    <name type="scientific">Escherichia coli (strain K12)</name>
    <dbReference type="NCBI Taxonomy" id="83333"/>
    <lineage>
        <taxon>Bacteria</taxon>
        <taxon>Pseudomonadati</taxon>
        <taxon>Pseudomonadota</taxon>
        <taxon>Gammaproteobacteria</taxon>
        <taxon>Enterobacterales</taxon>
        <taxon>Enterobacteriaceae</taxon>
        <taxon>Escherichia</taxon>
    </lineage>
</organism>
<keyword id="KW-0002">3D-structure</keyword>
<keyword id="KW-0032">Aminotransferase</keyword>
<keyword id="KW-0093">Biotin biosynthesis</keyword>
<keyword id="KW-0963">Cytoplasm</keyword>
<keyword id="KW-0663">Pyridoxal phosphate</keyword>
<keyword id="KW-1185">Reference proteome</keyword>
<keyword id="KW-0949">S-adenosyl-L-methionine</keyword>
<keyword id="KW-0808">Transferase</keyword>
<comment type="function">
    <text evidence="3 4 9">Catalyzes the transfer of the alpha-amino group from S-adenosyl-L-methionine (SAM) to 7-keto-8-aminopelargonic acid (KAPA) to form 7,8-diaminopelargonic acid (DAPA) (PubMed:1092681, PubMed:1092682). It is the only animotransferase known to utilize SAM as an amino donor (PubMed:1092681, PubMed:1092682). Complements a bioU deletion in Synechocystis PCC 6803 (PubMed:32042199).</text>
</comment>
<comment type="catalytic activity">
    <reaction evidence="3 4">
        <text>(8S)-8-amino-7-oxononanoate + S-adenosyl-L-methionine = S-adenosyl-4-methylsulfanyl-2-oxobutanoate + (7R,8S)-7,8-diammoniononanoate</text>
        <dbReference type="Rhea" id="RHEA:16861"/>
        <dbReference type="ChEBI" id="CHEBI:16490"/>
        <dbReference type="ChEBI" id="CHEBI:59789"/>
        <dbReference type="ChEBI" id="CHEBI:149468"/>
        <dbReference type="ChEBI" id="CHEBI:149469"/>
        <dbReference type="EC" id="2.6.1.62"/>
    </reaction>
</comment>
<comment type="cofactor">
    <cofactor evidence="3">
        <name>pyridoxal 5'-phosphate</name>
        <dbReference type="ChEBI" id="CHEBI:597326"/>
    </cofactor>
</comment>
<comment type="activity regulation">
    <text evidence="4 5 8">Inhibited by amiclenomycin. S-adenosyl-L-(2-hydroxy-4-methylthio)butyric acid and adenosine are competitive inhibitors with SAM and uncompetitive inhibitors with KAPA as substrates (PubMed:1092682). S-adenosyl-L-ethionine, adenine and 8-keto-7-aminopelargonic acid are non-competitive inhibitors with both substrates (PubMed:1092682).</text>
</comment>
<comment type="biophysicochemical properties">
    <kinetics>
        <KM evidence="4 6">1.2 uM for KAPA</KM>
        <KM evidence="4 6">150 uM for SAM</KM>
        <KM evidence="4 6">21 uM for pyridoxamine phosphate (PMP)</KM>
        <KM evidence="4 6">32 uM for pyridoxal phosphate (PLP)</KM>
        <KM evidence="4 6">1000 uM for 8-keto-7-aminopelargonic acid</KM>
        <Vmax evidence="4 6">0.16 umol/min/mg enzyme with KAPA as substrate</Vmax>
        <Vmax evidence="4 6">0.027 umol/min/mg enzyme with 8-keto-7-aminopelargonic acid as substrate</Vmax>
    </kinetics>
</comment>
<comment type="pathway">
    <text>Cofactor biosynthesis; biotin biosynthesis; 7,8-diaminononanoate from 8-amino-7-oxononanoate (SAM route): step 1/1.</text>
</comment>
<comment type="subunit">
    <text evidence="2 3 5 6 7">Homodimer.</text>
</comment>
<comment type="subcellular location">
    <subcellularLocation>
        <location evidence="1">Cytoplasm</location>
    </subcellularLocation>
</comment>
<comment type="induction">
    <text evidence="10">Repressed by BirA.</text>
</comment>
<comment type="disruption phenotype">
    <text evidence="9">Loss of biotin synthesis.</text>
</comment>
<comment type="miscellaneous">
    <text>Catalysis proceeds by a classical ping-pong bi-bi reaction mechanism.</text>
</comment>
<comment type="similarity">
    <text evidence="13">Belongs to the class-III pyridoxal-phosphate-dependent aminotransferase family. BioA subfamily.</text>
</comment>
<feature type="chain" id="PRO_0000120366" description="Adenosylmethionine-8-amino-7-oxononanoate aminotransferase">
    <location>
        <begin position="1"/>
        <end position="429"/>
    </location>
</feature>
<feature type="binding site" evidence="2 5 17 19">
    <location>
        <position position="52"/>
    </location>
    <ligand>
        <name>substrate</name>
    </ligand>
</feature>
<feature type="binding site" evidence="2 6 7 15 16 19 20 22">
    <location>
        <begin position="112"/>
        <end position="113"/>
    </location>
    <ligand>
        <name>pyridoxal 5'-phosphate</name>
        <dbReference type="ChEBI" id="CHEBI:597326"/>
    </ligand>
</feature>
<feature type="binding site" evidence="14">
    <location>
        <position position="144"/>
    </location>
    <ligand>
        <name>substrate</name>
    </ligand>
</feature>
<feature type="binding site" evidence="2 6 7 16 19 20 22">
    <location>
        <position position="245"/>
    </location>
    <ligand>
        <name>pyridoxal 5'-phosphate</name>
        <dbReference type="ChEBI" id="CHEBI:597326"/>
    </ligand>
</feature>
<feature type="binding site" evidence="2 5 17 19">
    <location>
        <position position="274"/>
    </location>
    <ligand>
        <name>substrate</name>
    </ligand>
</feature>
<feature type="binding site" evidence="2 19">
    <location>
        <position position="307"/>
    </location>
    <ligand>
        <name>substrate</name>
    </ligand>
</feature>
<feature type="binding site" evidence="2 6 7 15 16 19 20 22">
    <location>
        <begin position="308"/>
        <end position="309"/>
    </location>
    <ligand>
        <name>pyridoxal 5'-phosphate</name>
        <dbReference type="ChEBI" id="CHEBI:597326"/>
    </ligand>
</feature>
<feature type="binding site" evidence="2 5 17 18 19">
    <location>
        <position position="391"/>
    </location>
    <ligand>
        <name>substrate</name>
    </ligand>
</feature>
<feature type="site" description="Participates in the substrate recognition with KAPA and in a stacking interaction with the adenine ring of SAM" evidence="13">
    <location>
        <position position="17"/>
    </location>
</feature>
<feature type="modified residue" description="N6-(pyridoxal phosphate)lysine" evidence="6 7 15 16 19 20 21 23 24 25">
    <location>
        <position position="274"/>
    </location>
</feature>
<feature type="mutagenesis site" description="Severely reduces the aminotransferase activity." evidence="7">
    <original>Y</original>
    <variation>F</variation>
    <location>
        <position position="17"/>
    </location>
</feature>
<feature type="mutagenesis site" description="Severely reduces the aminotransferase activity." evidence="7">
    <original>Y</original>
    <variation>F</variation>
    <location>
        <position position="144"/>
    </location>
</feature>
<feature type="mutagenesis site" description="Loss of aminotransferase activity." evidence="7">
    <original>D</original>
    <variation>N</variation>
    <location>
        <position position="147"/>
    </location>
</feature>
<feature type="mutagenesis site" description="Has only a small effect on the rate of reaction with DAPA." evidence="7">
    <original>R</original>
    <variation>A</variation>
    <location>
        <position position="253"/>
    </location>
</feature>
<feature type="mutagenesis site" description="Increases aminotransferase activity toward SAM." evidence="7">
    <original>R</original>
    <variation>K</variation>
    <location>
        <position position="253"/>
    </location>
</feature>
<feature type="mutagenesis site" description="Loss of aminotransferase activity." evidence="7">
    <original>R</original>
    <variation>M</variation>
    <location>
        <position position="253"/>
    </location>
</feature>
<feature type="mutagenesis site" description="Increases aminotransferase activity toward SAM." evidence="7">
    <original>R</original>
    <variation>Q</variation>
    <location>
        <position position="253"/>
    </location>
</feature>
<feature type="mutagenesis site" description="Reduces aminotransferase activity." evidence="6">
    <original>R</original>
    <variation>A</variation>
    <location>
        <position position="391"/>
    </location>
</feature>
<feature type="sequence conflict" description="In Ref. 2; CAA00964." evidence="13" ref="2">
    <original>R</original>
    <variation>P</variation>
    <location>
        <position position="11"/>
    </location>
</feature>
<feature type="sequence conflict" description="In Ref. 1; AAA23514." evidence="13" ref="1">
    <original>TPQP</original>
    <variation>SGRNA</variation>
    <location>
        <begin position="99"/>
        <end position="102"/>
    </location>
</feature>
<feature type="helix" evidence="29">
    <location>
        <begin position="3"/>
        <end position="12"/>
    </location>
</feature>
<feature type="strand" evidence="29">
    <location>
        <begin position="20"/>
        <end position="22"/>
    </location>
</feature>
<feature type="strand" evidence="29">
    <location>
        <begin position="27"/>
        <end position="34"/>
    </location>
</feature>
<feature type="strand" evidence="29">
    <location>
        <begin position="36"/>
        <end position="39"/>
    </location>
</feature>
<feature type="strand" evidence="29">
    <location>
        <begin position="44"/>
        <end position="49"/>
    </location>
</feature>
<feature type="turn" evidence="29">
    <location>
        <begin position="50"/>
        <end position="54"/>
    </location>
</feature>
<feature type="helix" evidence="29">
    <location>
        <begin position="62"/>
        <end position="74"/>
    </location>
</feature>
<feature type="strand" evidence="29">
    <location>
        <begin position="81"/>
        <end position="84"/>
    </location>
</feature>
<feature type="helix" evidence="29">
    <location>
        <begin position="86"/>
        <end position="98"/>
    </location>
</feature>
<feature type="strand" evidence="29">
    <location>
        <begin position="105"/>
        <end position="111"/>
    </location>
</feature>
<feature type="helix" evidence="29">
    <location>
        <begin position="112"/>
        <end position="130"/>
    </location>
</feature>
<feature type="strand" evidence="29">
    <location>
        <begin position="136"/>
        <end position="140"/>
    </location>
</feature>
<feature type="helix" evidence="29">
    <location>
        <begin position="149"/>
        <end position="152"/>
    </location>
</feature>
<feature type="turn" evidence="29">
    <location>
        <begin position="157"/>
        <end position="161"/>
    </location>
</feature>
<feature type="helix" evidence="29">
    <location>
        <begin position="162"/>
        <end position="165"/>
    </location>
</feature>
<feature type="turn" evidence="29">
    <location>
        <begin position="166"/>
        <end position="168"/>
    </location>
</feature>
<feature type="strand" evidence="29">
    <location>
        <begin position="173"/>
        <end position="175"/>
    </location>
</feature>
<feature type="strand" evidence="26">
    <location>
        <begin position="180"/>
        <end position="184"/>
    </location>
</feature>
<feature type="helix" evidence="29">
    <location>
        <begin position="188"/>
        <end position="191"/>
    </location>
</feature>
<feature type="helix" evidence="29">
    <location>
        <begin position="192"/>
        <end position="201"/>
    </location>
</feature>
<feature type="turn" evidence="29">
    <location>
        <begin position="202"/>
        <end position="204"/>
    </location>
</feature>
<feature type="strand" evidence="29">
    <location>
        <begin position="205"/>
        <end position="210"/>
    </location>
</feature>
<feature type="strand" evidence="29">
    <location>
        <begin position="212"/>
        <end position="215"/>
    </location>
</feature>
<feature type="turn" evidence="29">
    <location>
        <begin position="217"/>
        <end position="219"/>
    </location>
</feature>
<feature type="strand" evidence="29">
    <location>
        <begin position="221"/>
        <end position="223"/>
    </location>
</feature>
<feature type="helix" evidence="29">
    <location>
        <begin position="226"/>
        <end position="238"/>
    </location>
</feature>
<feature type="strand" evidence="29">
    <location>
        <begin position="241"/>
        <end position="245"/>
    </location>
</feature>
<feature type="turn" evidence="29">
    <location>
        <begin position="247"/>
        <end position="254"/>
    </location>
</feature>
<feature type="strand" evidence="29">
    <location>
        <begin position="255"/>
        <end position="258"/>
    </location>
</feature>
<feature type="helix" evidence="29">
    <location>
        <begin position="259"/>
        <end position="263"/>
    </location>
</feature>
<feature type="strand" evidence="29">
    <location>
        <begin position="268"/>
        <end position="272"/>
    </location>
</feature>
<feature type="helix" evidence="28">
    <location>
        <begin position="274"/>
        <end position="277"/>
    </location>
</feature>
<feature type="strand" evidence="29">
    <location>
        <begin position="278"/>
        <end position="281"/>
    </location>
</feature>
<feature type="strand" evidence="29">
    <location>
        <begin position="284"/>
        <end position="288"/>
    </location>
</feature>
<feature type="helix" evidence="29">
    <location>
        <begin position="290"/>
        <end position="297"/>
    </location>
</feature>
<feature type="strand" evidence="27">
    <location>
        <begin position="299"/>
        <end position="303"/>
    </location>
</feature>
<feature type="turn" evidence="29">
    <location>
        <begin position="309"/>
        <end position="312"/>
    </location>
</feature>
<feature type="helix" evidence="29">
    <location>
        <begin position="314"/>
        <end position="328"/>
    </location>
</feature>
<feature type="helix" evidence="29">
    <location>
        <begin position="332"/>
        <end position="347"/>
    </location>
</feature>
<feature type="helix" evidence="29">
    <location>
        <begin position="348"/>
        <end position="352"/>
    </location>
</feature>
<feature type="strand" evidence="29">
    <location>
        <begin position="356"/>
        <end position="362"/>
    </location>
</feature>
<feature type="strand" evidence="29">
    <location>
        <begin position="365"/>
        <end position="372"/>
    </location>
</feature>
<feature type="helix" evidence="29">
    <location>
        <begin position="376"/>
        <end position="385"/>
    </location>
</feature>
<feature type="strand" evidence="29">
    <location>
        <begin position="396"/>
        <end position="399"/>
    </location>
</feature>
<feature type="helix" evidence="29">
    <location>
        <begin position="407"/>
        <end position="420"/>
    </location>
</feature>
<feature type="helix" evidence="29">
    <location>
        <begin position="424"/>
        <end position="426"/>
    </location>
</feature>
<name>BIOA_ECOLI</name>
<evidence type="ECO:0000250" key="1"/>
<evidence type="ECO:0000269" key="2">
    <source>
    </source>
</evidence>
<evidence type="ECO:0000269" key="3">
    <source>
    </source>
</evidence>
<evidence type="ECO:0000269" key="4">
    <source>
    </source>
</evidence>
<evidence type="ECO:0000269" key="5">
    <source>
    </source>
</evidence>
<evidence type="ECO:0000269" key="6">
    <source>
    </source>
</evidence>
<evidence type="ECO:0000269" key="7">
    <source>
    </source>
</evidence>
<evidence type="ECO:0000269" key="8">
    <source>
    </source>
</evidence>
<evidence type="ECO:0000269" key="9">
    <source>
    </source>
</evidence>
<evidence type="ECO:0000269" key="10">
    <source>
    </source>
</evidence>
<evidence type="ECO:0000303" key="11">
    <source>
    </source>
</evidence>
<evidence type="ECO:0000303" key="12">
    <source>
    </source>
</evidence>
<evidence type="ECO:0000305" key="13"/>
<evidence type="ECO:0000305" key="14">
    <source>
    </source>
</evidence>
<evidence type="ECO:0007744" key="15">
    <source>
        <dbReference type="PDB" id="1DTY"/>
    </source>
</evidence>
<evidence type="ECO:0007744" key="16">
    <source>
        <dbReference type="PDB" id="1MGV"/>
    </source>
</evidence>
<evidence type="ECO:0007744" key="17">
    <source>
        <dbReference type="PDB" id="1MLY"/>
    </source>
</evidence>
<evidence type="ECO:0007744" key="18">
    <source>
        <dbReference type="PDB" id="1MLZ"/>
    </source>
</evidence>
<evidence type="ECO:0007744" key="19">
    <source>
        <dbReference type="PDB" id="1QJ3"/>
    </source>
</evidence>
<evidence type="ECO:0007744" key="20">
    <source>
        <dbReference type="PDB" id="1QJ5"/>
    </source>
</evidence>
<evidence type="ECO:0007744" key="21">
    <source>
        <dbReference type="PDB" id="1S06"/>
    </source>
</evidence>
<evidence type="ECO:0007744" key="22">
    <source>
        <dbReference type="PDB" id="1S07"/>
    </source>
</evidence>
<evidence type="ECO:0007744" key="23">
    <source>
        <dbReference type="PDB" id="1S08"/>
    </source>
</evidence>
<evidence type="ECO:0007744" key="24">
    <source>
        <dbReference type="PDB" id="1S09"/>
    </source>
</evidence>
<evidence type="ECO:0007744" key="25">
    <source>
        <dbReference type="PDB" id="1S0A"/>
    </source>
</evidence>
<evidence type="ECO:0007829" key="26">
    <source>
        <dbReference type="PDB" id="1DTY"/>
    </source>
</evidence>
<evidence type="ECO:0007829" key="27">
    <source>
        <dbReference type="PDB" id="1MGV"/>
    </source>
</evidence>
<evidence type="ECO:0007829" key="28">
    <source>
        <dbReference type="PDB" id="1QJ5"/>
    </source>
</evidence>
<evidence type="ECO:0007829" key="29">
    <source>
        <dbReference type="PDB" id="1S0A"/>
    </source>
</evidence>
<gene>
    <name type="primary">bioA</name>
    <name type="ordered locus">b0774</name>
    <name type="ordered locus">JW0757</name>
</gene>
<reference key="1">
    <citation type="journal article" date="1988" name="J. Biol. Chem.">
        <title>The Escherichia coli biotin biosynthetic enzyme sequences predicted from the nucleotide sequence of the bio operon.</title>
        <authorList>
            <person name="Otsuka A.J."/>
            <person name="Buoncristiani M.R."/>
            <person name="Howard P.K."/>
            <person name="Flamm J."/>
            <person name="Johnson O."/>
            <person name="Yamamoto R."/>
            <person name="Uchida K."/>
            <person name="Cook C."/>
            <person name="Ruppert J."/>
            <person name="Matsuzaki J."/>
        </authorList>
    </citation>
    <scope>NUCLEOTIDE SEQUENCE [GENOMIC DNA]</scope>
</reference>
<reference key="2">
    <citation type="patent" date="1989-10-11" number="GB2216530">
        <title>Genetic material for expression of biotin synthetase enzymes.</title>
        <authorList>
            <person name="Pearson B.M."/>
            <person name="McKee R.A."/>
        </authorList>
    </citation>
    <scope>NUCLEOTIDE SEQUENCE [GENOMIC DNA]</scope>
</reference>
<reference key="3">
    <citation type="journal article" date="1997" name="Science">
        <title>The complete genome sequence of Escherichia coli K-12.</title>
        <authorList>
            <person name="Blattner F.R."/>
            <person name="Plunkett G. III"/>
            <person name="Bloch C.A."/>
            <person name="Perna N.T."/>
            <person name="Burland V."/>
            <person name="Riley M."/>
            <person name="Collado-Vides J."/>
            <person name="Glasner J.D."/>
            <person name="Rode C.K."/>
            <person name="Mayhew G.F."/>
            <person name="Gregor J."/>
            <person name="Davis N.W."/>
            <person name="Kirkpatrick H.A."/>
            <person name="Goeden M.A."/>
            <person name="Rose D.J."/>
            <person name="Mau B."/>
            <person name="Shao Y."/>
        </authorList>
    </citation>
    <scope>NUCLEOTIDE SEQUENCE [LARGE SCALE GENOMIC DNA]</scope>
    <source>
        <strain>K12 / MG1655 / ATCC 47076</strain>
    </source>
</reference>
<reference key="4">
    <citation type="journal article" date="2006" name="Mol. Syst. Biol.">
        <title>Highly accurate genome sequences of Escherichia coli K-12 strains MG1655 and W3110.</title>
        <authorList>
            <person name="Hayashi K."/>
            <person name="Morooka N."/>
            <person name="Yamamoto Y."/>
            <person name="Fujita K."/>
            <person name="Isono K."/>
            <person name="Choi S."/>
            <person name="Ohtsubo E."/>
            <person name="Baba T."/>
            <person name="Wanner B.L."/>
            <person name="Mori H."/>
            <person name="Horiuchi T."/>
        </authorList>
    </citation>
    <scope>NUCLEOTIDE SEQUENCE [LARGE SCALE GENOMIC DNA]</scope>
    <source>
        <strain>K12 / W3110 / ATCC 27325 / DSM 5911</strain>
    </source>
</reference>
<reference key="5">
    <citation type="journal article" date="1975" name="J. Biol. Chem.">
        <title>Purification and properties of 7, 8-diaminopelargonic acid aminotransferase. An enzyme in the biotin biosynthetic pathway.</title>
        <authorList>
            <person name="Stoner G.L."/>
            <person name="Eisenberg M.A."/>
        </authorList>
    </citation>
    <scope>FUNCTION</scope>
    <scope>SUBUNIT</scope>
    <scope>SUBSTRATE SPECIFICITY</scope>
    <scope>COFACTOR</scope>
    <scope>CATALYTIC ACTIVITY</scope>
</reference>
<reference key="6">
    <citation type="journal article" date="1975" name="J. Biol. Chem.">
        <title>Biosynthesis of 7, 8-diaminopelargonic acid from 7-keto-8-aminopelargonic acid and S-adenosyl-L-methionine. The kinetics of the reaction.</title>
        <authorList>
            <person name="Stoner G.L."/>
            <person name="Eisenberg M.A."/>
        </authorList>
    </citation>
    <scope>BIOPHYSICOCHEMICAL PROPERTIES</scope>
    <scope>ACTIVITY REGULATION</scope>
    <scope>FUNCTION</scope>
    <scope>CATALYTIC ACTIVITY</scope>
</reference>
<reference key="7">
    <citation type="journal article" date="1981" name="J. Mol. Biol.">
        <title>Genetic and biochemical characterization of the birA gene and its product: evidence for a direct role of biotin holoenzyme synthetase in repression of the biotin operon in Escherichia coli.</title>
        <authorList>
            <person name="Barker D.F."/>
            <person name="Campbell A.M."/>
        </authorList>
    </citation>
    <scope>INDUCTION</scope>
</reference>
<reference key="8">
    <citation type="journal article" date="2005" name="Biochem. Soc. Trans.">
        <title>Inhibition of 7,8-diaminopelargonic acid aminotransferase by amiclenomycin and analogues.</title>
        <authorList>
            <person name="Mann S."/>
            <person name="Marquet A."/>
            <person name="Ploux O."/>
        </authorList>
    </citation>
    <scope>ACTIVITY REGULATION</scope>
</reference>
<reference key="9">
    <citation type="journal article" date="2010" name="Nat. Chem. Biol.">
        <title>Biotin synthesis begins by hijacking the fatty acid synthetic pathway.</title>
        <authorList>
            <person name="Lin S."/>
            <person name="Hanson R.E."/>
            <person name="Cronan J.E."/>
        </authorList>
    </citation>
    <scope>SUBSTRATE SPECIFICITY</scope>
</reference>
<reference key="10">
    <citation type="journal article" date="2020" name="Nat. Chem. Biol.">
        <title>A suicide enzyme catalyzes multiple reactions for biotin biosynthesis in cyanobacteria.</title>
        <authorList>
            <person name="Sakaki K."/>
            <person name="Ohishi K."/>
            <person name="Shimizu T."/>
            <person name="Kobayashi I."/>
            <person name="Mori N."/>
            <person name="Matsuda K."/>
            <person name="Tomita T."/>
            <person name="Watanabe H."/>
            <person name="Tanaka K."/>
            <person name="Kuzuyama T."/>
            <person name="Nishiyama M."/>
        </authorList>
    </citation>
    <scope>FUNCTION</scope>
    <scope>DISRUPTION PHENOTYPE</scope>
    <source>
        <strain>K12 / BW25113</strain>
    </source>
</reference>
<reference key="11">
    <citation type="journal article" date="1999" name="J. Mol. Biol.">
        <title>Crystal structure of diaminopelargonic acid synthase: evolutionary relationships between pyridoxal-5'-phosphate-dependent enzymes.</title>
        <authorList>
            <person name="Kaeck H."/>
            <person name="Sandmark J."/>
            <person name="Gibson K."/>
            <person name="Schneider G."/>
            <person name="Lindqvist Y."/>
        </authorList>
    </citation>
    <scope>X-RAY CRYSTALLOGRAPHY (1.8 ANGSTROMS) IN COMPLEX WITH SUBSTRATE AND PYRIDOXAL PHOSPHATE</scope>
    <source>
        <strain>B / BL21-DE3</strain>
    </source>
</reference>
<reference key="12">
    <citation type="journal article" date="2002" name="Biochemistry">
        <title>The dual-specific active site of 7,8-diaminopelargonic acid synthase and the effect of the R391A mutation.</title>
        <authorList>
            <person name="Eliot A.C."/>
            <person name="Sandmark J."/>
            <person name="Schneider G."/>
            <person name="Kirsch J.F."/>
        </authorList>
    </citation>
    <scope>X-RAY CRYSTALLOGRAPHY (2.1 ANGSTROMS) IN COMPLEX WITH PYRIDOXAL PHOSPHATE AND MUTANTS ALA-391</scope>
    <scope>MUTAGENESIS OF ARG-391</scope>
    <scope>BIOPHYSICOCHEMICAL PROPERTIES</scope>
</reference>
<reference key="13">
    <citation type="journal article" date="2002" name="J. Biol. Chem.">
        <title>Structural basis for the inhibition of the biosynthesis of biotin by the antibiotic amiclenomycin.</title>
        <authorList>
            <person name="Sandmark J."/>
            <person name="Mann S."/>
            <person name="Marquet A."/>
            <person name="Schneider G."/>
        </authorList>
    </citation>
    <scope>X-RAY CRYSTALLOGRAPHY (1.8 ANGSTROMS) IN COMPLEX WITH SUBSTRATE ANALOGS</scope>
    <scope>ACTIVITY REGULATION</scope>
</reference>
<reference key="14">
    <citation type="journal article" date="2004" name="Biochemistry">
        <title>Conserved and nonconserved residues in the substrate binding site of 7,8-diaminopelargonic acid synthase from Escherichia coli are essential for catalysis.</title>
        <authorList>
            <person name="Sandmark J."/>
            <person name="Eliot A.C."/>
            <person name="Famm K."/>
            <person name="Schneider G."/>
            <person name="Kirsch J.F."/>
        </authorList>
    </citation>
    <scope>X-RAY CRYSTALLOGRAPHY (1.7 ANGSTROMS) OF MUTANTS PHE-17; PHE-144; ASN-147; ALA-253 AND LYS-253 IN COMPLEX WITH PYRIDOXAL PHOSPHATE</scope>
    <scope>MUTAGENESIS OF TYR-17; TYR-144; ASP-147 AND ARG-253</scope>
</reference>
<accession>P12995</accession>
<accession>Q2MBJ5</accession>